<proteinExistence type="inferred from homology"/>
<comment type="function">
    <text evidence="1">Methyltransferase required for the conversion of demethylmenaquinol (DMKH2) to menaquinol (MKH2).</text>
</comment>
<comment type="catalytic activity">
    <reaction evidence="1">
        <text>a 2-demethylmenaquinol + S-adenosyl-L-methionine = a menaquinol + S-adenosyl-L-homocysteine + H(+)</text>
        <dbReference type="Rhea" id="RHEA:42640"/>
        <dbReference type="Rhea" id="RHEA-COMP:9539"/>
        <dbReference type="Rhea" id="RHEA-COMP:9563"/>
        <dbReference type="ChEBI" id="CHEBI:15378"/>
        <dbReference type="ChEBI" id="CHEBI:18151"/>
        <dbReference type="ChEBI" id="CHEBI:55437"/>
        <dbReference type="ChEBI" id="CHEBI:57856"/>
        <dbReference type="ChEBI" id="CHEBI:59789"/>
        <dbReference type="EC" id="2.1.1.163"/>
    </reaction>
</comment>
<comment type="pathway">
    <text evidence="1">Quinol/quinone metabolism; menaquinone biosynthesis; menaquinol from 1,4-dihydroxy-2-naphthoate: step 2/2.</text>
</comment>
<comment type="similarity">
    <text evidence="1">Belongs to the class I-like SAM-binding methyltransferase superfamily. MenG/UbiE family.</text>
</comment>
<gene>
    <name evidence="1" type="primary">menG</name>
    <name type="ordered locus">BAA_1603</name>
</gene>
<accession>C3P5A0</accession>
<reference key="1">
    <citation type="submission" date="2009-04" db="EMBL/GenBank/DDBJ databases">
        <title>Genome sequence of Bacillus anthracis A0248.</title>
        <authorList>
            <person name="Dodson R.J."/>
            <person name="Munk A.C."/>
            <person name="Bruce D."/>
            <person name="Detter C."/>
            <person name="Tapia R."/>
            <person name="Sutton G."/>
            <person name="Sims D."/>
            <person name="Brettin T."/>
        </authorList>
    </citation>
    <scope>NUCLEOTIDE SEQUENCE [LARGE SCALE GENOMIC DNA]</scope>
    <source>
        <strain>A0248</strain>
    </source>
</reference>
<sequence length="237" mass="26887">MQQSKEERVHDVFEKISDKYDVMNSVISFQRHKAWRKETMRIMDVKPGSKALDVCCGTADWTIALAGAVGEQGKVVGLDFSENMLSVGKQKVEALQLKQVELLHGNAMELPFEDNTFDYVTIGFGLRNVPDYMHVLKEMTRVVKPGGKVICLETSQPTMIGFRQGYILYFKYIMPLFGKLFAKSYKEYSWLQESASTFPGMKELANMFEKAGLERVQVKPFTFGVAAMHLGMKPESK</sequence>
<feature type="chain" id="PRO_1000187725" description="Demethylmenaquinone methyltransferase">
    <location>
        <begin position="1"/>
        <end position="237"/>
    </location>
</feature>
<feature type="binding site" evidence="1">
    <location>
        <position position="58"/>
    </location>
    <ligand>
        <name>S-adenosyl-L-methionine</name>
        <dbReference type="ChEBI" id="CHEBI:59789"/>
    </ligand>
</feature>
<feature type="binding site" evidence="1">
    <location>
        <position position="79"/>
    </location>
    <ligand>
        <name>S-adenosyl-L-methionine</name>
        <dbReference type="ChEBI" id="CHEBI:59789"/>
    </ligand>
</feature>
<feature type="binding site" evidence="1">
    <location>
        <begin position="106"/>
        <end position="107"/>
    </location>
    <ligand>
        <name>S-adenosyl-L-methionine</name>
        <dbReference type="ChEBI" id="CHEBI:59789"/>
    </ligand>
</feature>
<name>MENG_BACAA</name>
<dbReference type="EC" id="2.1.1.163" evidence="1"/>
<dbReference type="EMBL" id="CP001598">
    <property type="protein sequence ID" value="ACQ48022.1"/>
    <property type="molecule type" value="Genomic_DNA"/>
</dbReference>
<dbReference type="RefSeq" id="WP_001187667.1">
    <property type="nucleotide sequence ID" value="NC_012659.1"/>
</dbReference>
<dbReference type="SMR" id="C3P5A0"/>
<dbReference type="GeneID" id="75084824"/>
<dbReference type="KEGG" id="bai:BAA_1603"/>
<dbReference type="HOGENOM" id="CLU_037990_0_0_9"/>
<dbReference type="UniPathway" id="UPA00079">
    <property type="reaction ID" value="UER00169"/>
</dbReference>
<dbReference type="GO" id="GO:0043770">
    <property type="term" value="F:demethylmenaquinone methyltransferase activity"/>
    <property type="evidence" value="ECO:0007669"/>
    <property type="project" value="UniProtKB-UniRule"/>
</dbReference>
<dbReference type="GO" id="GO:0009234">
    <property type="term" value="P:menaquinone biosynthetic process"/>
    <property type="evidence" value="ECO:0007669"/>
    <property type="project" value="UniProtKB-UniRule"/>
</dbReference>
<dbReference type="GO" id="GO:0032259">
    <property type="term" value="P:methylation"/>
    <property type="evidence" value="ECO:0007669"/>
    <property type="project" value="UniProtKB-KW"/>
</dbReference>
<dbReference type="CDD" id="cd02440">
    <property type="entry name" value="AdoMet_MTases"/>
    <property type="match status" value="1"/>
</dbReference>
<dbReference type="FunFam" id="3.40.50.150:FF:000086">
    <property type="entry name" value="Demethylmenaquinone methyltransferase"/>
    <property type="match status" value="1"/>
</dbReference>
<dbReference type="Gene3D" id="3.40.50.150">
    <property type="entry name" value="Vaccinia Virus protein VP39"/>
    <property type="match status" value="1"/>
</dbReference>
<dbReference type="HAMAP" id="MF_01813">
    <property type="entry name" value="MenG_UbiE_methyltr"/>
    <property type="match status" value="1"/>
</dbReference>
<dbReference type="InterPro" id="IPR014122">
    <property type="entry name" value="MenG_heptapren"/>
</dbReference>
<dbReference type="InterPro" id="IPR029063">
    <property type="entry name" value="SAM-dependent_MTases_sf"/>
</dbReference>
<dbReference type="InterPro" id="IPR004033">
    <property type="entry name" value="UbiE/COQ5_MeTrFase"/>
</dbReference>
<dbReference type="InterPro" id="IPR023576">
    <property type="entry name" value="UbiE/COQ5_MeTrFase_CS"/>
</dbReference>
<dbReference type="NCBIfam" id="TIGR02752">
    <property type="entry name" value="MenG_heptapren"/>
    <property type="match status" value="1"/>
</dbReference>
<dbReference type="NCBIfam" id="TIGR01934">
    <property type="entry name" value="MenG_MenH_UbiE"/>
    <property type="match status" value="1"/>
</dbReference>
<dbReference type="NCBIfam" id="NF001243">
    <property type="entry name" value="PRK00216.1-4"/>
    <property type="match status" value="1"/>
</dbReference>
<dbReference type="NCBIfam" id="NF001244">
    <property type="entry name" value="PRK00216.1-5"/>
    <property type="match status" value="1"/>
</dbReference>
<dbReference type="PANTHER" id="PTHR43591:SF24">
    <property type="entry name" value="2-METHOXY-6-POLYPRENYL-1,4-BENZOQUINOL METHYLASE, MITOCHONDRIAL"/>
    <property type="match status" value="1"/>
</dbReference>
<dbReference type="PANTHER" id="PTHR43591">
    <property type="entry name" value="METHYLTRANSFERASE"/>
    <property type="match status" value="1"/>
</dbReference>
<dbReference type="Pfam" id="PF01209">
    <property type="entry name" value="Ubie_methyltran"/>
    <property type="match status" value="1"/>
</dbReference>
<dbReference type="SUPFAM" id="SSF53335">
    <property type="entry name" value="S-adenosyl-L-methionine-dependent methyltransferases"/>
    <property type="match status" value="1"/>
</dbReference>
<dbReference type="PROSITE" id="PS51608">
    <property type="entry name" value="SAM_MT_UBIE"/>
    <property type="match status" value="1"/>
</dbReference>
<dbReference type="PROSITE" id="PS01183">
    <property type="entry name" value="UBIE_1"/>
    <property type="match status" value="1"/>
</dbReference>
<dbReference type="PROSITE" id="PS01184">
    <property type="entry name" value="UBIE_2"/>
    <property type="match status" value="1"/>
</dbReference>
<keyword id="KW-0474">Menaquinone biosynthesis</keyword>
<keyword id="KW-0489">Methyltransferase</keyword>
<keyword id="KW-0949">S-adenosyl-L-methionine</keyword>
<keyword id="KW-0808">Transferase</keyword>
<protein>
    <recommendedName>
        <fullName evidence="1">Demethylmenaquinone methyltransferase</fullName>
        <ecNumber evidence="1">2.1.1.163</ecNumber>
    </recommendedName>
</protein>
<organism>
    <name type="scientific">Bacillus anthracis (strain A0248)</name>
    <dbReference type="NCBI Taxonomy" id="592021"/>
    <lineage>
        <taxon>Bacteria</taxon>
        <taxon>Bacillati</taxon>
        <taxon>Bacillota</taxon>
        <taxon>Bacilli</taxon>
        <taxon>Bacillales</taxon>
        <taxon>Bacillaceae</taxon>
        <taxon>Bacillus</taxon>
        <taxon>Bacillus cereus group</taxon>
    </lineage>
</organism>
<evidence type="ECO:0000255" key="1">
    <source>
        <dbReference type="HAMAP-Rule" id="MF_01813"/>
    </source>
</evidence>